<feature type="chain" id="PRO_0000343820" description="UPF0056 inner membrane protein MarC">
    <location>
        <begin position="1"/>
        <end position="221"/>
    </location>
</feature>
<feature type="topological domain" description="Periplasmic" evidence="2">
    <location>
        <begin position="1"/>
        <end position="7"/>
    </location>
</feature>
<feature type="transmembrane region" description="Helical" evidence="2">
    <location>
        <begin position="8"/>
        <end position="28"/>
    </location>
</feature>
<feature type="topological domain" description="Cytoplasmic" evidence="2">
    <location>
        <begin position="29"/>
        <end position="44"/>
    </location>
</feature>
<feature type="transmembrane region" description="Helical" evidence="2">
    <location>
        <begin position="45"/>
        <end position="65"/>
    </location>
</feature>
<feature type="topological domain" description="Periplasmic" evidence="2">
    <location>
        <begin position="66"/>
        <end position="68"/>
    </location>
</feature>
<feature type="transmembrane region" description="Helical" evidence="2">
    <location>
        <begin position="69"/>
        <end position="89"/>
    </location>
</feature>
<feature type="topological domain" description="Cytoplasmic" evidence="2">
    <location>
        <begin position="90"/>
        <end position="118"/>
    </location>
</feature>
<feature type="transmembrane region" description="Helical" evidence="2">
    <location>
        <begin position="119"/>
        <end position="139"/>
    </location>
</feature>
<feature type="topological domain" description="Periplasmic" evidence="2">
    <location>
        <begin position="140"/>
        <end position="154"/>
    </location>
</feature>
<feature type="transmembrane region" description="Helical" evidence="2">
    <location>
        <begin position="155"/>
        <end position="175"/>
    </location>
</feature>
<feature type="topological domain" description="Cytoplasmic" evidence="2">
    <location>
        <begin position="176"/>
        <end position="196"/>
    </location>
</feature>
<feature type="transmembrane region" description="Helical" evidence="2">
    <location>
        <begin position="197"/>
        <end position="217"/>
    </location>
</feature>
<feature type="topological domain" description="Periplasmic" evidence="2">
    <location>
        <begin position="218"/>
        <end position="221"/>
    </location>
</feature>
<organism>
    <name type="scientific">Escherichia coli O6:K15:H31 (strain 536 / UPEC)</name>
    <dbReference type="NCBI Taxonomy" id="362663"/>
    <lineage>
        <taxon>Bacteria</taxon>
        <taxon>Pseudomonadati</taxon>
        <taxon>Pseudomonadota</taxon>
        <taxon>Gammaproteobacteria</taxon>
        <taxon>Enterobacterales</taxon>
        <taxon>Enterobacteriaceae</taxon>
        <taxon>Escherichia</taxon>
    </lineage>
</organism>
<name>MARC_ECOL5</name>
<keyword id="KW-0997">Cell inner membrane</keyword>
<keyword id="KW-1003">Cell membrane</keyword>
<keyword id="KW-0472">Membrane</keyword>
<keyword id="KW-0812">Transmembrane</keyword>
<keyword id="KW-1133">Transmembrane helix</keyword>
<proteinExistence type="inferred from homology"/>
<dbReference type="EMBL" id="CP000247">
    <property type="protein sequence ID" value="ABG69519.1"/>
    <property type="molecule type" value="Genomic_DNA"/>
</dbReference>
<dbReference type="RefSeq" id="WP_000885033.1">
    <property type="nucleotide sequence ID" value="NC_008253.1"/>
</dbReference>
<dbReference type="GeneID" id="93775693"/>
<dbReference type="KEGG" id="ecp:ECP_1512"/>
<dbReference type="HOGENOM" id="CLU_079909_2_0_6"/>
<dbReference type="Proteomes" id="UP000009182">
    <property type="component" value="Chromosome"/>
</dbReference>
<dbReference type="GO" id="GO:0005886">
    <property type="term" value="C:plasma membrane"/>
    <property type="evidence" value="ECO:0007669"/>
    <property type="project" value="UniProtKB-SubCell"/>
</dbReference>
<dbReference type="InterPro" id="IPR002771">
    <property type="entry name" value="Multi_antbiot-R_MarC"/>
</dbReference>
<dbReference type="NCBIfam" id="TIGR00427">
    <property type="entry name" value="NAAT family transporter"/>
    <property type="match status" value="1"/>
</dbReference>
<dbReference type="NCBIfam" id="NF008228">
    <property type="entry name" value="PRK10995.1"/>
    <property type="match status" value="1"/>
</dbReference>
<dbReference type="PANTHER" id="PTHR33508:SF2">
    <property type="entry name" value="UPF0056 INNER MEMBRANE PROTEIN MARC"/>
    <property type="match status" value="1"/>
</dbReference>
<dbReference type="PANTHER" id="PTHR33508">
    <property type="entry name" value="UPF0056 MEMBRANE PROTEIN YHCE"/>
    <property type="match status" value="1"/>
</dbReference>
<dbReference type="Pfam" id="PF01914">
    <property type="entry name" value="MarC"/>
    <property type="match status" value="1"/>
</dbReference>
<evidence type="ECO:0000250" key="1"/>
<evidence type="ECO:0000255" key="2"/>
<evidence type="ECO:0000305" key="3"/>
<comment type="subcellular location">
    <subcellularLocation>
        <location evidence="1">Cell inner membrane</location>
        <topology evidence="1">Multi-pass membrane protein</topology>
    </subcellularLocation>
</comment>
<comment type="similarity">
    <text evidence="3">Belongs to the UPF0056 (MarC) family.</text>
</comment>
<protein>
    <recommendedName>
        <fullName>UPF0056 inner membrane protein MarC</fullName>
    </recommendedName>
</protein>
<accession>Q0THR0</accession>
<reference key="1">
    <citation type="journal article" date="2006" name="Mol. Microbiol.">
        <title>Role of pathogenicity island-associated integrases in the genome plasticity of uropathogenic Escherichia coli strain 536.</title>
        <authorList>
            <person name="Hochhut B."/>
            <person name="Wilde C."/>
            <person name="Balling G."/>
            <person name="Middendorf B."/>
            <person name="Dobrindt U."/>
            <person name="Brzuszkiewicz E."/>
            <person name="Gottschalk G."/>
            <person name="Carniel E."/>
            <person name="Hacker J."/>
        </authorList>
    </citation>
    <scope>NUCLEOTIDE SEQUENCE [LARGE SCALE GENOMIC DNA]</scope>
    <source>
        <strain>536 / UPEC</strain>
    </source>
</reference>
<gene>
    <name type="primary">marC</name>
    <name type="ordered locus">ECP_1512</name>
</gene>
<sequence>MLDLFKAIGLGLVVLLPLANPLTTVALFLGLAGNMNSAERNRQSLMASVYVFAIMMVAYYAGQLVMDTFGISIPGLRIAGGLIVAFIGFRMLFPQQKAIDSPEAKSKSEELEDEPSANIAFVPLAMPSTAGPGTIAMIISSASTVRQSSTFADWVLMVAPPLIFFLVAVILWGSLRSSGAIMRLVGKGGIEAISRLMGFLLVCMGVQFIINGILEIIKTYH</sequence>